<gene>
    <name type="primary">EAT1</name>
    <name type="ordered locus">Ecym_7076</name>
</gene>
<dbReference type="EC" id="2.3.1.268"/>
<dbReference type="EC" id="3.1.2.1"/>
<dbReference type="EC" id="3.1.1.-"/>
<dbReference type="EMBL" id="CP002503">
    <property type="protein sequence ID" value="AET40929.1"/>
    <property type="molecule type" value="Genomic_DNA"/>
</dbReference>
<dbReference type="RefSeq" id="XP_003647746.1">
    <property type="nucleotide sequence ID" value="XM_003647698.1"/>
</dbReference>
<dbReference type="SMR" id="G8JVR4"/>
<dbReference type="FunCoup" id="G8JVR4">
    <property type="interactions" value="458"/>
</dbReference>
<dbReference type="STRING" id="931890.G8JVR4"/>
<dbReference type="ESTHER" id="erecy-g8jvr4">
    <property type="family name" value="ABHD11-Acetyl_transferase"/>
</dbReference>
<dbReference type="GeneID" id="11469347"/>
<dbReference type="KEGG" id="erc:Ecym_7076"/>
<dbReference type="eggNOG" id="KOG2382">
    <property type="taxonomic scope" value="Eukaryota"/>
</dbReference>
<dbReference type="HOGENOM" id="CLU_020336_53_0_1"/>
<dbReference type="InParanoid" id="G8JVR4"/>
<dbReference type="OMA" id="FFVDSIC"/>
<dbReference type="OrthoDB" id="8119704at2759"/>
<dbReference type="Proteomes" id="UP000006790">
    <property type="component" value="Chromosome 7"/>
</dbReference>
<dbReference type="GO" id="GO:0005739">
    <property type="term" value="C:mitochondrion"/>
    <property type="evidence" value="ECO:0007669"/>
    <property type="project" value="UniProtKB-SubCell"/>
</dbReference>
<dbReference type="GO" id="GO:0003986">
    <property type="term" value="F:acetyl-CoA hydrolase activity"/>
    <property type="evidence" value="ECO:0007669"/>
    <property type="project" value="UniProtKB-EC"/>
</dbReference>
<dbReference type="GO" id="GO:0016740">
    <property type="term" value="F:transferase activity"/>
    <property type="evidence" value="ECO:0007669"/>
    <property type="project" value="UniProtKB-KW"/>
</dbReference>
<dbReference type="Gene3D" id="3.40.50.1820">
    <property type="entry name" value="alpha/beta hydrolase"/>
    <property type="match status" value="1"/>
</dbReference>
<dbReference type="InterPro" id="IPR000073">
    <property type="entry name" value="AB_hydrolase_1"/>
</dbReference>
<dbReference type="InterPro" id="IPR029058">
    <property type="entry name" value="AB_hydrolase_fold"/>
</dbReference>
<dbReference type="PANTHER" id="PTHR46118">
    <property type="entry name" value="PROTEIN ABHD11"/>
    <property type="match status" value="1"/>
</dbReference>
<dbReference type="PANTHER" id="PTHR46118:SF4">
    <property type="entry name" value="PROTEIN ABHD11"/>
    <property type="match status" value="1"/>
</dbReference>
<dbReference type="Pfam" id="PF00561">
    <property type="entry name" value="Abhydrolase_1"/>
    <property type="match status" value="1"/>
</dbReference>
<dbReference type="SUPFAM" id="SSF53474">
    <property type="entry name" value="alpha/beta-Hydrolases"/>
    <property type="match status" value="1"/>
</dbReference>
<evidence type="ECO:0000250" key="1">
    <source>
        <dbReference type="UniProtKB" id="A0A1E3P8S6"/>
    </source>
</evidence>
<evidence type="ECO:0000255" key="2"/>
<evidence type="ECO:0000269" key="3">
    <source>
    </source>
</evidence>
<evidence type="ECO:0000305" key="4"/>
<keyword id="KW-0378">Hydrolase</keyword>
<keyword id="KW-0496">Mitochondrion</keyword>
<keyword id="KW-1185">Reference proteome</keyword>
<keyword id="KW-0808">Transferase</keyword>
<proteinExistence type="evidence at protein level"/>
<name>EAT1_ERECY</name>
<reference key="1">
    <citation type="journal article" date="2011" name="G3 (Bethesda)">
        <title>Genome evolution in the Eremothecium clade of the Saccharomyces complex revealed by comparative genomics.</title>
        <authorList>
            <person name="Wendland J."/>
            <person name="Walther A."/>
        </authorList>
    </citation>
    <scope>NUCLEOTIDE SEQUENCE [LARGE SCALE GENOMIC DNA]</scope>
    <source>
        <strain>CBS 270.75 / DBVPG 7215 / KCTC 17166 / NRRL Y-17582</strain>
    </source>
</reference>
<reference key="2">
    <citation type="journal article" date="2017" name="Metab. Eng.">
        <title>Ethyl acetate production by the elusive alcohol acetyltransferase from yeast.</title>
        <authorList>
            <person name="Kruis A.J."/>
            <person name="Levisson M."/>
            <person name="Mars A.E."/>
            <person name="van der Ploeg M."/>
            <person name="Garces Daza F."/>
            <person name="Ellena V."/>
            <person name="Kengen S.W.M."/>
            <person name="van der Oost J."/>
            <person name="Weusthuis R.A."/>
        </authorList>
    </citation>
    <scope>FUNCTION</scope>
    <scope>CATALYTIC ACTIVITY</scope>
    <source>
        <strain>CBS 270.75 / DBVPG 7215 / KCTC 17166 / NRRL Y-17582</strain>
    </source>
</reference>
<accession>G8JVR4</accession>
<protein>
    <recommendedName>
        <fullName>Ethanol acetyltransferase 1</fullName>
        <ecNumber>2.3.1.268</ecNumber>
    </recommendedName>
    <alternativeName>
        <fullName>Acetyl-CoA hydrolase</fullName>
        <ecNumber>3.1.2.1</ecNumber>
    </alternativeName>
    <alternativeName>
        <fullName>Acetyl-CoA thioesterase</fullName>
    </alternativeName>
    <alternativeName>
        <fullName>Alcohol acetyltransferase</fullName>
        <shortName>AAT</shortName>
    </alternativeName>
    <alternativeName>
        <fullName>Ethyl acetate esterase</fullName>
        <ecNumber>3.1.1.-</ecNumber>
    </alternativeName>
</protein>
<comment type="function">
    <text evidence="1 3">Alcohol acetyltransferase that catalyzes the synthesis of ethyl acetate from ethanol and acetyl-CoA (PubMed:28356220). Can also function as a thioesterase by hydrolyzing acetyl-CoA in the absence of ethanol, as well as esterase hydrolyzing ethyl acetate (By similarity).</text>
</comment>
<comment type="catalytic activity">
    <reaction evidence="3">
        <text>ethanol + acetyl-CoA = ethyl acetate + CoA</text>
        <dbReference type="Rhea" id="RHEA:55972"/>
        <dbReference type="ChEBI" id="CHEBI:16236"/>
        <dbReference type="ChEBI" id="CHEBI:27750"/>
        <dbReference type="ChEBI" id="CHEBI:57287"/>
        <dbReference type="ChEBI" id="CHEBI:57288"/>
        <dbReference type="EC" id="2.3.1.268"/>
    </reaction>
</comment>
<comment type="catalytic activity">
    <reaction evidence="1">
        <text>acetyl-CoA + H2O = acetate + CoA + H(+)</text>
        <dbReference type="Rhea" id="RHEA:20289"/>
        <dbReference type="ChEBI" id="CHEBI:15377"/>
        <dbReference type="ChEBI" id="CHEBI:15378"/>
        <dbReference type="ChEBI" id="CHEBI:30089"/>
        <dbReference type="ChEBI" id="CHEBI:57287"/>
        <dbReference type="ChEBI" id="CHEBI:57288"/>
        <dbReference type="EC" id="3.1.2.1"/>
    </reaction>
</comment>
<comment type="catalytic activity">
    <reaction evidence="1">
        <text>ethyl acetate + H2O = ethanol + acetate + H(+)</text>
        <dbReference type="Rhea" id="RHEA:58148"/>
        <dbReference type="ChEBI" id="CHEBI:15377"/>
        <dbReference type="ChEBI" id="CHEBI:15378"/>
        <dbReference type="ChEBI" id="CHEBI:16236"/>
        <dbReference type="ChEBI" id="CHEBI:27750"/>
        <dbReference type="ChEBI" id="CHEBI:30089"/>
    </reaction>
</comment>
<comment type="subcellular location">
    <subcellularLocation>
        <location evidence="1">Mitochondrion</location>
    </subcellularLocation>
</comment>
<comment type="similarity">
    <text evidence="4">Belongs to the AB hydrolase superfamily.</text>
</comment>
<organism>
    <name type="scientific">Eremothecium cymbalariae (strain CBS 270.75 / DBVPG 7215 / KCTC 17166 / NRRL Y-17582)</name>
    <name type="common">Yeast</name>
    <dbReference type="NCBI Taxonomy" id="931890"/>
    <lineage>
        <taxon>Eukaryota</taxon>
        <taxon>Fungi</taxon>
        <taxon>Dikarya</taxon>
        <taxon>Ascomycota</taxon>
        <taxon>Saccharomycotina</taxon>
        <taxon>Saccharomycetes</taxon>
        <taxon>Saccharomycetales</taxon>
        <taxon>Saccharomycetaceae</taxon>
        <taxon>Eremothecium</taxon>
    </lineage>
</organism>
<feature type="chain" id="PRO_0000446177" description="Ethanol acetyltransferase 1" evidence="2">
    <location>
        <begin position="1"/>
        <end position="358"/>
    </location>
</feature>
<feature type="domain" description="AB hydrolase-1" evidence="2">
    <location>
        <begin position="59"/>
        <end position="166"/>
    </location>
</feature>
<feature type="active site" description="Charge relay system" evidence="1">
    <location>
        <position position="132"/>
    </location>
</feature>
<feature type="active site" description="Charge relay system" evidence="1">
    <location>
        <position position="156"/>
    </location>
</feature>
<feature type="active site" description="Charge relay system" evidence="1">
    <location>
        <position position="305"/>
    </location>
</feature>
<sequence length="358" mass="40864">MKMLQGVRAFQKLKKSCAYSTAAKELKPLPVKETVNMAYDLHLPERSVIGKMPYHSPEPIVFIHGLFGWKRFYRNDCKTLATALQTPVYAVDMRNHGDTEHAMPFDYNTLMDDLVLLLRKLDIKKVNLIGYSMGGKMSMLTALNYPELVSSACIIDNAPINQPHISPFLKVFSKSCQHVENMKIRATDKEWRSKVAVGLKRYIPNPGIRSYLLQNVSGTPPKKYRSPVIDWNDGNVHFVNPVNHLFQCVVKDASAWPVEQVAGKQFLGPVNFIRGTKSEFVNADGEKAIAEYFPYHKIQSINTTHNVLHERPQEYLRSVIDFFKTTRYVLERKRDSERVTMIAKPKPLTSSQNAAEYS</sequence>